<feature type="chain" id="PRO_0000002369" description="Aspartokinase">
    <location>
        <begin position="1"/>
        <end position="411"/>
    </location>
</feature>
<feature type="domain" description="ACT 1" evidence="2">
    <location>
        <begin position="264"/>
        <end position="338"/>
    </location>
</feature>
<feature type="domain" description="ACT 2" evidence="2">
    <location>
        <begin position="344"/>
        <end position="411"/>
    </location>
</feature>
<feature type="binding site" evidence="1">
    <location>
        <begin position="7"/>
        <end position="10"/>
    </location>
    <ligand>
        <name>ATP</name>
        <dbReference type="ChEBI" id="CHEBI:30616"/>
    </ligand>
</feature>
<feature type="binding site" evidence="1">
    <location>
        <begin position="25"/>
        <end position="30"/>
    </location>
    <ligand>
        <name>substrate</name>
    </ligand>
</feature>
<feature type="binding site" evidence="1">
    <location>
        <position position="41"/>
    </location>
    <ligand>
        <name>ATP</name>
        <dbReference type="ChEBI" id="CHEBI:30616"/>
    </ligand>
</feature>
<feature type="binding site" evidence="1">
    <location>
        <begin position="47"/>
        <end position="49"/>
    </location>
    <ligand>
        <name>substrate</name>
    </ligand>
</feature>
<feature type="binding site" evidence="1">
    <location>
        <position position="74"/>
    </location>
    <ligand>
        <name>substrate</name>
    </ligand>
</feature>
<feature type="binding site" evidence="1">
    <location>
        <begin position="125"/>
        <end position="126"/>
    </location>
    <ligand>
        <name>substrate</name>
    </ligand>
</feature>
<feature type="binding site" evidence="1">
    <location>
        <begin position="150"/>
        <end position="153"/>
    </location>
    <ligand>
        <name>substrate</name>
    </ligand>
</feature>
<feature type="binding site" evidence="1">
    <location>
        <position position="153"/>
    </location>
    <ligand>
        <name>substrate</name>
    </ligand>
</feature>
<feature type="binding site" evidence="1">
    <location>
        <begin position="173"/>
        <end position="174"/>
    </location>
    <ligand>
        <name>ATP</name>
        <dbReference type="ChEBI" id="CHEBI:30616"/>
    </ligand>
</feature>
<feature type="binding site" evidence="1">
    <location>
        <begin position="179"/>
        <end position="184"/>
    </location>
    <ligand>
        <name>ATP</name>
        <dbReference type="ChEBI" id="CHEBI:30616"/>
    </ligand>
</feature>
<feature type="binding site" evidence="1">
    <location>
        <begin position="289"/>
        <end position="291"/>
    </location>
    <ligand>
        <name>substrate</name>
    </ligand>
</feature>
<feature type="binding site" evidence="1">
    <location>
        <position position="295"/>
    </location>
    <ligand>
        <name>substrate</name>
    </ligand>
</feature>
<feature type="binding site" evidence="1">
    <location>
        <begin position="355"/>
        <end position="356"/>
    </location>
    <ligand>
        <name>substrate</name>
    </ligand>
</feature>
<feature type="binding site" evidence="1">
    <location>
        <begin position="369"/>
        <end position="370"/>
    </location>
    <ligand>
        <name>substrate</name>
    </ligand>
</feature>
<feature type="binding site" evidence="1">
    <location>
        <begin position="376"/>
        <end position="377"/>
    </location>
    <ligand>
        <name>substrate</name>
    </ligand>
</feature>
<feature type="site" description="Contribution to the catalysis" evidence="1">
    <location>
        <position position="7"/>
    </location>
</feature>
<feature type="site" description="Contribution to the catalysis" evidence="1">
    <location>
        <position position="74"/>
    </location>
</feature>
<feature type="splice variant" id="VSP_018653" description="In isoform Beta." evidence="3">
    <location>
        <begin position="1"/>
        <end position="245"/>
    </location>
</feature>
<protein>
    <recommendedName>
        <fullName>Aspartokinase</fullName>
        <ecNumber>2.7.2.4</ecNumber>
    </recommendedName>
    <alternativeName>
        <fullName>Aspartate kinase</fullName>
    </alternativeName>
</protein>
<keyword id="KW-0024">Alternative initiation</keyword>
<keyword id="KW-0028">Amino-acid biosynthesis</keyword>
<keyword id="KW-0067">ATP-binding</keyword>
<keyword id="KW-0220">Diaminopimelate biosynthesis</keyword>
<keyword id="KW-0903">Direct protein sequencing</keyword>
<keyword id="KW-0418">Kinase</keyword>
<keyword id="KW-0457">Lysine biosynthesis</keyword>
<keyword id="KW-0547">Nucleotide-binding</keyword>
<keyword id="KW-0677">Repeat</keyword>
<keyword id="KW-0808">Transferase</keyword>
<sequence length="411" mass="44343">MGLIVQKFGGTSVGSVERILNVANRVIEEKKNGNDVVVVVSAMGKTTDELVDLAKQISAHPPKREMDMLLTTGEQVTISLLAMALNEKGYEAISYTGWQAGITTEPVFGNARILNIETEKIQKQLNEGKIVVVAGFQGIDEHGEITTLGRGGSDTTAVALAAALKAEKCDIYTDVTGVFTTDPRYVKSARKLASISYDEMLELANLGAGVLHPRAVEFAKNYGITLEVRSSMEREEGTIIEEEVTMEQNLVVRGVAFEDEITRVTVFGLPNSLTSLSTIFTTLAQNRINVDIIIQSATDAETTNLSFSIKSDDLEETMAVLENNKNLLNYQGIESETGLAKVSIVGSGMISNPGVAAKMFEVLALNGIQVKMVSTSEIKVSTVVEESQMIKAVEALHQAFELSGSAVKSER</sequence>
<comment type="function">
    <text evidence="1">Catalyzes the phosphorylation of the beta-carboxyl group of aspartic acid with ATP to yield 4-phospho-L-aspartate, which is involved in the branched biosynthetic pathway leading to the biosynthesis of amino acids threonine, isoleucine and methionine.</text>
</comment>
<comment type="catalytic activity">
    <reaction>
        <text>L-aspartate + ATP = 4-phospho-L-aspartate + ADP</text>
        <dbReference type="Rhea" id="RHEA:23776"/>
        <dbReference type="ChEBI" id="CHEBI:29991"/>
        <dbReference type="ChEBI" id="CHEBI:30616"/>
        <dbReference type="ChEBI" id="CHEBI:57535"/>
        <dbReference type="ChEBI" id="CHEBI:456216"/>
        <dbReference type="EC" id="2.7.2.4"/>
    </reaction>
</comment>
<comment type="activity regulation">
    <text>Lysine-sensitive.</text>
</comment>
<comment type="pathway">
    <text>Amino-acid biosynthesis; L-lysine biosynthesis via DAP pathway; (S)-tetrahydrodipicolinate from L-aspartate: step 1/4.</text>
</comment>
<comment type="pathway">
    <text>Amino-acid biosynthesis; L-methionine biosynthesis via de novo pathway; L-homoserine from L-aspartate: step 1/3.</text>
</comment>
<comment type="pathway">
    <text>Amino-acid biosynthesis; L-threonine biosynthesis; L-threonine from L-aspartate: step 1/5.</text>
</comment>
<comment type="subunit">
    <text evidence="1">Tetramer consisting of 2 isoforms Alpha (catalytic and regulation) and of a homodimer of 2 isoforms Beta (regulation).</text>
</comment>
<comment type="alternative products">
    <event type="alternative initiation"/>
    <isoform>
        <id>Q59229-1</id>
        <name>Alpha</name>
        <name>Aspartokinase 2 subunit alpha</name>
        <sequence type="displayed"/>
    </isoform>
    <isoform>
        <id>Q59229-2</id>
        <name>Beta</name>
        <name>Aspartokinase 2 subunit beta</name>
        <sequence type="described" ref="VSP_018653"/>
    </isoform>
</comment>
<comment type="similarity">
    <text evidence="3">Belongs to the aspartokinase family.</text>
</comment>
<name>AK_BACSG</name>
<accession>Q59229</accession>
<proteinExistence type="evidence at protein level"/>
<evidence type="ECO:0000250" key="1"/>
<evidence type="ECO:0000255" key="2">
    <source>
        <dbReference type="PROSITE-ProRule" id="PRU01007"/>
    </source>
</evidence>
<evidence type="ECO:0000305" key="3"/>
<reference key="1">
    <citation type="journal article" date="1992" name="Appl. Environ. Microbiol.">
        <title>Cloning and nucleotide sequence of the gene coding for aspartokinase II from a thermophilic methylotrophic Bacillus sp.</title>
        <authorList>
            <person name="Schendel F.J."/>
            <person name="Flickinger M.C."/>
        </authorList>
    </citation>
    <scope>NUCLEOTIDE SEQUENCE [GENOMIC DNA]</scope>
    <scope>PARTIAL PROTEIN SEQUENCE</scope>
</reference>
<organism>
    <name type="scientific">Bacillus sp. (strain MGA3)</name>
    <dbReference type="NCBI Taxonomy" id="126782"/>
    <lineage>
        <taxon>Bacteria</taxon>
        <taxon>Bacillati</taxon>
        <taxon>Bacillota</taxon>
        <taxon>Bacilli</taxon>
        <taxon>Bacillales</taxon>
        <taxon>Bacillaceae</taxon>
        <taxon>Bacillus</taxon>
    </lineage>
</organism>
<gene>
    <name type="primary">lysC</name>
</gene>
<dbReference type="EC" id="2.7.2.4"/>
<dbReference type="EMBL" id="M93419">
    <property type="protein sequence ID" value="AAA22251.1"/>
    <property type="molecule type" value="Genomic_DNA"/>
</dbReference>
<dbReference type="SMR" id="Q59229"/>
<dbReference type="UniPathway" id="UPA00034">
    <property type="reaction ID" value="UER00015"/>
</dbReference>
<dbReference type="UniPathway" id="UPA00050">
    <property type="reaction ID" value="UER00461"/>
</dbReference>
<dbReference type="UniPathway" id="UPA00051">
    <property type="reaction ID" value="UER00462"/>
</dbReference>
<dbReference type="GO" id="GO:0005829">
    <property type="term" value="C:cytosol"/>
    <property type="evidence" value="ECO:0007669"/>
    <property type="project" value="TreeGrafter"/>
</dbReference>
<dbReference type="GO" id="GO:0004072">
    <property type="term" value="F:aspartate kinase activity"/>
    <property type="evidence" value="ECO:0000314"/>
    <property type="project" value="CACAO"/>
</dbReference>
<dbReference type="GO" id="GO:0005524">
    <property type="term" value="F:ATP binding"/>
    <property type="evidence" value="ECO:0007669"/>
    <property type="project" value="UniProtKB-KW"/>
</dbReference>
<dbReference type="GO" id="GO:0019877">
    <property type="term" value="P:diaminopimelate biosynthetic process"/>
    <property type="evidence" value="ECO:0007669"/>
    <property type="project" value="UniProtKB-KW"/>
</dbReference>
<dbReference type="GO" id="GO:0009090">
    <property type="term" value="P:homoserine biosynthetic process"/>
    <property type="evidence" value="ECO:0007669"/>
    <property type="project" value="TreeGrafter"/>
</dbReference>
<dbReference type="GO" id="GO:0009089">
    <property type="term" value="P:lysine biosynthetic process via diaminopimelate"/>
    <property type="evidence" value="ECO:0007669"/>
    <property type="project" value="UniProtKB-UniPathway"/>
</dbReference>
<dbReference type="GO" id="GO:0009088">
    <property type="term" value="P:threonine biosynthetic process"/>
    <property type="evidence" value="ECO:0007669"/>
    <property type="project" value="UniProtKB-UniPathway"/>
</dbReference>
<dbReference type="CDD" id="cd04261">
    <property type="entry name" value="AAK_AKii-LysC-BS"/>
    <property type="match status" value="1"/>
</dbReference>
<dbReference type="CDD" id="cd04923">
    <property type="entry name" value="ACT_AK-LysC-DapG-like_2"/>
    <property type="match status" value="1"/>
</dbReference>
<dbReference type="CDD" id="cd04913">
    <property type="entry name" value="ACT_AKii-LysC-BS-like_1"/>
    <property type="match status" value="1"/>
</dbReference>
<dbReference type="FunFam" id="3.40.1160.10:FF:000002">
    <property type="entry name" value="Aspartokinase"/>
    <property type="match status" value="1"/>
</dbReference>
<dbReference type="FunFam" id="3.30.2130.10:FF:000001">
    <property type="entry name" value="Bifunctional aspartokinase/homoserine dehydrogenase"/>
    <property type="match status" value="1"/>
</dbReference>
<dbReference type="Gene3D" id="3.40.1160.10">
    <property type="entry name" value="Acetylglutamate kinase-like"/>
    <property type="match status" value="1"/>
</dbReference>
<dbReference type="Gene3D" id="3.30.2130.10">
    <property type="entry name" value="VC0802-like"/>
    <property type="match status" value="1"/>
</dbReference>
<dbReference type="InterPro" id="IPR036393">
    <property type="entry name" value="AceGlu_kinase-like_sf"/>
</dbReference>
<dbReference type="InterPro" id="IPR045865">
    <property type="entry name" value="ACT-like_dom_sf"/>
</dbReference>
<dbReference type="InterPro" id="IPR054352">
    <property type="entry name" value="ACT_Aspartokinase"/>
</dbReference>
<dbReference type="InterPro" id="IPR002912">
    <property type="entry name" value="ACT_dom"/>
</dbReference>
<dbReference type="InterPro" id="IPR041740">
    <property type="entry name" value="AKii-LysC-BS"/>
</dbReference>
<dbReference type="InterPro" id="IPR001048">
    <property type="entry name" value="Asp/Glu/Uridylate_kinase"/>
</dbReference>
<dbReference type="InterPro" id="IPR005260">
    <property type="entry name" value="Asp_kin_monofn"/>
</dbReference>
<dbReference type="InterPro" id="IPR001341">
    <property type="entry name" value="Asp_kinase"/>
</dbReference>
<dbReference type="InterPro" id="IPR018042">
    <property type="entry name" value="Aspartate_kinase_CS"/>
</dbReference>
<dbReference type="NCBIfam" id="TIGR00656">
    <property type="entry name" value="asp_kin_monofn"/>
    <property type="match status" value="1"/>
</dbReference>
<dbReference type="NCBIfam" id="TIGR00657">
    <property type="entry name" value="asp_kinases"/>
    <property type="match status" value="1"/>
</dbReference>
<dbReference type="NCBIfam" id="NF005154">
    <property type="entry name" value="PRK06635.1-2"/>
    <property type="match status" value="1"/>
</dbReference>
<dbReference type="NCBIfam" id="NF005155">
    <property type="entry name" value="PRK06635.1-4"/>
    <property type="match status" value="1"/>
</dbReference>
<dbReference type="NCBIfam" id="NF005156">
    <property type="entry name" value="PRK06635.1-5"/>
    <property type="match status" value="1"/>
</dbReference>
<dbReference type="PANTHER" id="PTHR21499">
    <property type="entry name" value="ASPARTATE KINASE"/>
    <property type="match status" value="1"/>
</dbReference>
<dbReference type="PANTHER" id="PTHR21499:SF3">
    <property type="entry name" value="ASPARTOKINASE"/>
    <property type="match status" value="1"/>
</dbReference>
<dbReference type="Pfam" id="PF00696">
    <property type="entry name" value="AA_kinase"/>
    <property type="match status" value="1"/>
</dbReference>
<dbReference type="Pfam" id="PF22468">
    <property type="entry name" value="ACT_9"/>
    <property type="match status" value="2"/>
</dbReference>
<dbReference type="PIRSF" id="PIRSF000726">
    <property type="entry name" value="Asp_kin"/>
    <property type="match status" value="1"/>
</dbReference>
<dbReference type="SUPFAM" id="SSF55021">
    <property type="entry name" value="ACT-like"/>
    <property type="match status" value="2"/>
</dbReference>
<dbReference type="SUPFAM" id="SSF53633">
    <property type="entry name" value="Carbamate kinase-like"/>
    <property type="match status" value="1"/>
</dbReference>
<dbReference type="PROSITE" id="PS51671">
    <property type="entry name" value="ACT"/>
    <property type="match status" value="2"/>
</dbReference>
<dbReference type="PROSITE" id="PS00324">
    <property type="entry name" value="ASPARTOKINASE"/>
    <property type="match status" value="1"/>
</dbReference>